<proteinExistence type="inferred from homology"/>
<comment type="function">
    <text evidence="1">An accessory protein needed during the final step in the assembly of 30S ribosomal subunit, possibly for assembly of the head region. Essential for efficient processing of 16S rRNA. May be needed both before and after RbfA during the maturation of 16S rRNA. It has affinity for free ribosomal 30S subunits but not for 70S ribosomes.</text>
</comment>
<comment type="subunit">
    <text evidence="1">Binds ribosomal protein uS19.</text>
</comment>
<comment type="subcellular location">
    <subcellularLocation>
        <location evidence="1">Cytoplasm</location>
    </subcellularLocation>
</comment>
<comment type="domain">
    <text evidence="1">The PRC barrel domain binds ribosomal protein uS19.</text>
</comment>
<comment type="similarity">
    <text evidence="1">Belongs to the RimM family.</text>
</comment>
<sequence length="169" mass="17822">MTRTDRLCVGAIAGAFGVKGEVRLKSFCAEPSDIASYGPLFTEDGGRSFRVTLTRPVAGALGARLSGVATKEEADALRGVQLYADRDRLPSLGDDEFYHADLIGLEVRDTGGALLGRVHAVHNHGAGDILEVTGAGRREALLLPFTRAVVPTVDLSIGRIVADPPEGLE</sequence>
<organism>
    <name type="scientific">Cereibacter sphaeroides (strain ATCC 17025 / ATH 2.4.3)</name>
    <name type="common">Rhodobacter sphaeroides</name>
    <dbReference type="NCBI Taxonomy" id="349102"/>
    <lineage>
        <taxon>Bacteria</taxon>
        <taxon>Pseudomonadati</taxon>
        <taxon>Pseudomonadota</taxon>
        <taxon>Alphaproteobacteria</taxon>
        <taxon>Rhodobacterales</taxon>
        <taxon>Paracoccaceae</taxon>
        <taxon>Cereibacter</taxon>
    </lineage>
</organism>
<evidence type="ECO:0000255" key="1">
    <source>
        <dbReference type="HAMAP-Rule" id="MF_00014"/>
    </source>
</evidence>
<gene>
    <name evidence="1" type="primary">rimM</name>
    <name type="ordered locus">Rsph17025_0182</name>
</gene>
<dbReference type="EMBL" id="CP000661">
    <property type="protein sequence ID" value="ABP69092.1"/>
    <property type="molecule type" value="Genomic_DNA"/>
</dbReference>
<dbReference type="SMR" id="A4WNX8"/>
<dbReference type="STRING" id="349102.Rsph17025_0182"/>
<dbReference type="KEGG" id="rsq:Rsph17025_0182"/>
<dbReference type="eggNOG" id="COG0806">
    <property type="taxonomic scope" value="Bacteria"/>
</dbReference>
<dbReference type="HOGENOM" id="CLU_077636_0_1_5"/>
<dbReference type="BioCyc" id="RSPH349102:G1G8M-187-MONOMER"/>
<dbReference type="GO" id="GO:0005737">
    <property type="term" value="C:cytoplasm"/>
    <property type="evidence" value="ECO:0007669"/>
    <property type="project" value="UniProtKB-SubCell"/>
</dbReference>
<dbReference type="GO" id="GO:0005840">
    <property type="term" value="C:ribosome"/>
    <property type="evidence" value="ECO:0007669"/>
    <property type="project" value="InterPro"/>
</dbReference>
<dbReference type="GO" id="GO:0043022">
    <property type="term" value="F:ribosome binding"/>
    <property type="evidence" value="ECO:0007669"/>
    <property type="project" value="InterPro"/>
</dbReference>
<dbReference type="GO" id="GO:0042274">
    <property type="term" value="P:ribosomal small subunit biogenesis"/>
    <property type="evidence" value="ECO:0007669"/>
    <property type="project" value="UniProtKB-UniRule"/>
</dbReference>
<dbReference type="GO" id="GO:0006364">
    <property type="term" value="P:rRNA processing"/>
    <property type="evidence" value="ECO:0007669"/>
    <property type="project" value="UniProtKB-UniRule"/>
</dbReference>
<dbReference type="Gene3D" id="2.30.30.240">
    <property type="entry name" value="PRC-barrel domain"/>
    <property type="match status" value="1"/>
</dbReference>
<dbReference type="Gene3D" id="2.40.30.60">
    <property type="entry name" value="RimM"/>
    <property type="match status" value="1"/>
</dbReference>
<dbReference type="HAMAP" id="MF_00014">
    <property type="entry name" value="Ribosome_mat_RimM"/>
    <property type="match status" value="1"/>
</dbReference>
<dbReference type="InterPro" id="IPR011033">
    <property type="entry name" value="PRC_barrel-like_sf"/>
</dbReference>
<dbReference type="InterPro" id="IPR056792">
    <property type="entry name" value="PRC_RimM"/>
</dbReference>
<dbReference type="InterPro" id="IPR011961">
    <property type="entry name" value="RimM"/>
</dbReference>
<dbReference type="InterPro" id="IPR002676">
    <property type="entry name" value="RimM_N"/>
</dbReference>
<dbReference type="InterPro" id="IPR036976">
    <property type="entry name" value="RimM_N_sf"/>
</dbReference>
<dbReference type="InterPro" id="IPR009000">
    <property type="entry name" value="Transl_B-barrel_sf"/>
</dbReference>
<dbReference type="NCBIfam" id="TIGR02273">
    <property type="entry name" value="16S_RimM"/>
    <property type="match status" value="1"/>
</dbReference>
<dbReference type="PANTHER" id="PTHR33692">
    <property type="entry name" value="RIBOSOME MATURATION FACTOR RIMM"/>
    <property type="match status" value="1"/>
</dbReference>
<dbReference type="PANTHER" id="PTHR33692:SF1">
    <property type="entry name" value="RIBOSOME MATURATION FACTOR RIMM"/>
    <property type="match status" value="1"/>
</dbReference>
<dbReference type="Pfam" id="PF24986">
    <property type="entry name" value="PRC_RimM"/>
    <property type="match status" value="1"/>
</dbReference>
<dbReference type="Pfam" id="PF01782">
    <property type="entry name" value="RimM"/>
    <property type="match status" value="1"/>
</dbReference>
<dbReference type="SUPFAM" id="SSF50346">
    <property type="entry name" value="PRC-barrel domain"/>
    <property type="match status" value="1"/>
</dbReference>
<dbReference type="SUPFAM" id="SSF50447">
    <property type="entry name" value="Translation proteins"/>
    <property type="match status" value="1"/>
</dbReference>
<accession>A4WNX8</accession>
<reference key="1">
    <citation type="submission" date="2007-04" db="EMBL/GenBank/DDBJ databases">
        <title>Complete sequence of chromosome of Rhodobacter sphaeroides ATCC 17025.</title>
        <authorList>
            <consortium name="US DOE Joint Genome Institute"/>
            <person name="Copeland A."/>
            <person name="Lucas S."/>
            <person name="Lapidus A."/>
            <person name="Barry K."/>
            <person name="Detter J.C."/>
            <person name="Glavina del Rio T."/>
            <person name="Hammon N."/>
            <person name="Israni S."/>
            <person name="Dalin E."/>
            <person name="Tice H."/>
            <person name="Pitluck S."/>
            <person name="Chertkov O."/>
            <person name="Brettin T."/>
            <person name="Bruce D."/>
            <person name="Han C."/>
            <person name="Schmutz J."/>
            <person name="Larimer F."/>
            <person name="Land M."/>
            <person name="Hauser L."/>
            <person name="Kyrpides N."/>
            <person name="Kim E."/>
            <person name="Richardson P."/>
            <person name="Mackenzie C."/>
            <person name="Choudhary M."/>
            <person name="Donohue T.J."/>
            <person name="Kaplan S."/>
        </authorList>
    </citation>
    <scope>NUCLEOTIDE SEQUENCE [LARGE SCALE GENOMIC DNA]</scope>
    <source>
        <strain>ATCC 17025 / ATH 2.4.3</strain>
    </source>
</reference>
<feature type="chain" id="PRO_1000001225" description="Ribosome maturation factor RimM">
    <location>
        <begin position="1"/>
        <end position="169"/>
    </location>
</feature>
<feature type="domain" description="PRC barrel" evidence="1">
    <location>
        <begin position="94"/>
        <end position="168"/>
    </location>
</feature>
<keyword id="KW-0143">Chaperone</keyword>
<keyword id="KW-0963">Cytoplasm</keyword>
<keyword id="KW-0690">Ribosome biogenesis</keyword>
<keyword id="KW-0698">rRNA processing</keyword>
<name>RIMM_CERS5</name>
<protein>
    <recommendedName>
        <fullName evidence="1">Ribosome maturation factor RimM</fullName>
    </recommendedName>
</protein>